<dbReference type="EC" id="3.4.21.110" evidence="2"/>
<dbReference type="EMBL" id="BA000034">
    <property type="protein sequence ID" value="BAC64819.1"/>
    <property type="molecule type" value="Genomic_DNA"/>
</dbReference>
<dbReference type="SMR" id="P0DD35"/>
<dbReference type="MEROPS" id="S08.020"/>
<dbReference type="KEGG" id="sps:SPs1724"/>
<dbReference type="HOGENOM" id="CLU_001768_3_0_9"/>
<dbReference type="GO" id="GO:0005576">
    <property type="term" value="C:extracellular region"/>
    <property type="evidence" value="ECO:0007669"/>
    <property type="project" value="UniProtKB-KW"/>
</dbReference>
<dbReference type="GO" id="GO:0016020">
    <property type="term" value="C:membrane"/>
    <property type="evidence" value="ECO:0007669"/>
    <property type="project" value="InterPro"/>
</dbReference>
<dbReference type="GO" id="GO:0004252">
    <property type="term" value="F:serine-type endopeptidase activity"/>
    <property type="evidence" value="ECO:0007669"/>
    <property type="project" value="InterPro"/>
</dbReference>
<dbReference type="GO" id="GO:0006508">
    <property type="term" value="P:proteolysis"/>
    <property type="evidence" value="ECO:0007669"/>
    <property type="project" value="UniProtKB-KW"/>
</dbReference>
<dbReference type="CDD" id="cd02133">
    <property type="entry name" value="PA_C5a_like"/>
    <property type="match status" value="1"/>
</dbReference>
<dbReference type="CDD" id="cd07475">
    <property type="entry name" value="Peptidases_S8_C5a_Peptidase"/>
    <property type="match status" value="1"/>
</dbReference>
<dbReference type="Gene3D" id="2.60.40.4070">
    <property type="match status" value="1"/>
</dbReference>
<dbReference type="Gene3D" id="3.50.30.30">
    <property type="match status" value="1"/>
</dbReference>
<dbReference type="Gene3D" id="2.60.40.10">
    <property type="entry name" value="Immunoglobulins"/>
    <property type="match status" value="1"/>
</dbReference>
<dbReference type="Gene3D" id="3.40.50.200">
    <property type="entry name" value="Peptidase S8/S53 domain"/>
    <property type="match status" value="1"/>
</dbReference>
<dbReference type="Gene3D" id="2.60.40.1710">
    <property type="entry name" value="Subtilisin-like superfamily"/>
    <property type="match status" value="1"/>
</dbReference>
<dbReference type="InterPro" id="IPR010435">
    <property type="entry name" value="C5a/SBT2-like_Fn3"/>
</dbReference>
<dbReference type="InterPro" id="IPR034216">
    <property type="entry name" value="C5a_Peptidase"/>
</dbReference>
<dbReference type="InterPro" id="IPR013783">
    <property type="entry name" value="Ig-like_fold"/>
</dbReference>
<dbReference type="InterPro" id="IPR019931">
    <property type="entry name" value="LPXTG_anchor"/>
</dbReference>
<dbReference type="InterPro" id="IPR046450">
    <property type="entry name" value="PA_dom_sf"/>
</dbReference>
<dbReference type="InterPro" id="IPR003137">
    <property type="entry name" value="PA_domain"/>
</dbReference>
<dbReference type="InterPro" id="IPR000209">
    <property type="entry name" value="Peptidase_S8/S53_dom"/>
</dbReference>
<dbReference type="InterPro" id="IPR036852">
    <property type="entry name" value="Peptidase_S8/S53_dom_sf"/>
</dbReference>
<dbReference type="InterPro" id="IPR023827">
    <property type="entry name" value="Peptidase_S8_Asp-AS"/>
</dbReference>
<dbReference type="InterPro" id="IPR022398">
    <property type="entry name" value="Peptidase_S8_His-AS"/>
</dbReference>
<dbReference type="InterPro" id="IPR023828">
    <property type="entry name" value="Peptidase_S8_Ser-AS"/>
</dbReference>
<dbReference type="InterPro" id="IPR050131">
    <property type="entry name" value="Peptidase_S8_subtilisin-like"/>
</dbReference>
<dbReference type="InterPro" id="IPR015500">
    <property type="entry name" value="Peptidase_S8_subtilisin-rel"/>
</dbReference>
<dbReference type="InterPro" id="IPR053869">
    <property type="entry name" value="ScpA_Fn3_3rd"/>
</dbReference>
<dbReference type="PANTHER" id="PTHR43806:SF11">
    <property type="entry name" value="CEREVISIN-RELATED"/>
    <property type="match status" value="1"/>
</dbReference>
<dbReference type="PANTHER" id="PTHR43806">
    <property type="entry name" value="PEPTIDASE S8"/>
    <property type="match status" value="1"/>
</dbReference>
<dbReference type="Pfam" id="PF13585">
    <property type="entry name" value="CHU_C"/>
    <property type="match status" value="1"/>
</dbReference>
<dbReference type="Pfam" id="PF06280">
    <property type="entry name" value="fn3_5"/>
    <property type="match status" value="1"/>
</dbReference>
<dbReference type="Pfam" id="PF02225">
    <property type="entry name" value="PA"/>
    <property type="match status" value="1"/>
</dbReference>
<dbReference type="Pfam" id="PF00082">
    <property type="entry name" value="Peptidase_S8"/>
    <property type="match status" value="1"/>
</dbReference>
<dbReference type="Pfam" id="PF22143">
    <property type="entry name" value="ScpA_C"/>
    <property type="match status" value="1"/>
</dbReference>
<dbReference type="PRINTS" id="PR00723">
    <property type="entry name" value="SUBTILISIN"/>
</dbReference>
<dbReference type="SUPFAM" id="SSF52025">
    <property type="entry name" value="PA domain"/>
    <property type="match status" value="1"/>
</dbReference>
<dbReference type="SUPFAM" id="SSF52743">
    <property type="entry name" value="Subtilisin-like"/>
    <property type="match status" value="1"/>
</dbReference>
<dbReference type="PROSITE" id="PS50847">
    <property type="entry name" value="GRAM_POS_ANCHORING"/>
    <property type="match status" value="1"/>
</dbReference>
<dbReference type="PROSITE" id="PS51892">
    <property type="entry name" value="SUBTILASE"/>
    <property type="match status" value="1"/>
</dbReference>
<dbReference type="PROSITE" id="PS00136">
    <property type="entry name" value="SUBTILASE_ASP"/>
    <property type="match status" value="1"/>
</dbReference>
<dbReference type="PROSITE" id="PS00137">
    <property type="entry name" value="SUBTILASE_HIS"/>
    <property type="match status" value="1"/>
</dbReference>
<dbReference type="PROSITE" id="PS00138">
    <property type="entry name" value="SUBTILASE_SER"/>
    <property type="match status" value="1"/>
</dbReference>
<protein>
    <recommendedName>
        <fullName>C5a peptidase</fullName>
        <ecNumber evidence="2">3.4.21.110</ecNumber>
    </recommendedName>
    <alternativeName>
        <fullName>SCP</fullName>
    </alternativeName>
</protein>
<keyword id="KW-0134">Cell wall</keyword>
<keyword id="KW-0378">Hydrolase</keyword>
<keyword id="KW-0572">Peptidoglycan-anchor</keyword>
<keyword id="KW-0645">Protease</keyword>
<keyword id="KW-0677">Repeat</keyword>
<keyword id="KW-0964">Secreted</keyword>
<keyword id="KW-0720">Serine protease</keyword>
<keyword id="KW-0732">Signal</keyword>
<keyword id="KW-0843">Virulence</keyword>
<comment type="function">
    <text evidence="2">This virulence factor of S.pyogenes specifically cleaves the human serum chemotaxin C5a at '68-Lys-|-Asp-69' bond near its C-terminus, destroying its ability to serve as a chemoattractant.</text>
</comment>
<comment type="catalytic activity">
    <reaction evidence="2">
        <text>The primary cleavage site is at 67-His-|-Lys-68 in human C5a with a minor secondary cleavage site at 58-Ala-|-Ser-59.</text>
        <dbReference type="EC" id="3.4.21.110"/>
    </reaction>
</comment>
<comment type="subcellular location">
    <subcellularLocation>
        <location evidence="4">Secreted</location>
        <location evidence="4">Cell wall</location>
        <topology evidence="4">Peptidoglycan-anchor</topology>
    </subcellularLocation>
</comment>
<comment type="PTM">
    <text evidence="3">Cleaved by SpeB protease; leading to its degradation. Degradation by SpeB is probably strictly regulated to preserve integrity of C5a peptidase.</text>
</comment>
<comment type="similarity">
    <text evidence="7">Belongs to the peptidase S8 family.</text>
</comment>
<organism>
    <name type="scientific">Streptococcus pyogenes serotype M3 (strain SSI-1)</name>
    <dbReference type="NCBI Taxonomy" id="193567"/>
    <lineage>
        <taxon>Bacteria</taxon>
        <taxon>Bacillati</taxon>
        <taxon>Bacillota</taxon>
        <taxon>Bacilli</taxon>
        <taxon>Lactobacillales</taxon>
        <taxon>Streptococcaceae</taxon>
        <taxon>Streptococcus</taxon>
    </lineage>
</organism>
<name>C5AP_STRPQ</name>
<gene>
    <name type="primary">scpA</name>
    <name type="ordered locus">SPs1724</name>
</gene>
<sequence>MRKKQKLPFDKLAIALMSTSILLNAQSDIKANTVTEDTPATEQAVEVPQQTAVSEEAPSSSSKETNPPQTPDDAEETVADKANDLAPQAPAKTADIPATSKETIRDLNDPSHVKTLQEKAGKGAGTVVAVIDAGFDKNHEAWRLTDKSKARYQSKEDLEKAKKDHGITYGEWVNDKVAYYHDYSKDGKTAVDQEHGTHVSGILSGNAPSETKEPYRLEGAMPEAQLLLMRVEIVNGLADYARNYAQAIRDAVNLGAKVINMSFGNAALAYANLPDETKKAFDYAKSKGVSIVTSAGNDSSFGGKTRLPLADHPDYGVVGTPAAADSTLTVASYSPDKQLTETATVKTADQQDKEMPVLSTNRFEPNKAYDYAYANRGTKEDDFKDVKGKIALIERGDIDFKDKIANAKKAGAVGVLIYDNQDKGFPIELPNVDQMPAAFISRKDGLLLKDNSKKTITFNATPKVLPTASGTKLSRFSSWGLTADGNIKPDIAAPGQDILSSVANNKYAKLSGTSMSAPLVAGIMGLLQKQYETQYPDMTPSERLDLAKKVLMSSATALYDEDEKAYFSPRQQGAGAVDAKKASAATMYVTDKDNTSSKVHLNNVSDKFEVTVTVHNKSDKPQELYYQATVQTDKVDGKHFALAPKALYETSWQKITIPANSSKQVTVPIDASRFSKDLLAQMKNGYFLEGFVRFKQDPTKEELMSIPYIGFRGDFGNLSALEKPIYDSKDGSSYYHEANSDAKDQLDGDGLQFYALKNNFTALTTESNPWTIIKAVKEGVENIEDIESSEITETIFAGTFAKQDDDSHYYIHRHANGKPYAAISPNGDGNRDYVQFQGTFLRNAKNLVAEVLDKEGDVVWTSEVTEQVVKNYNNDLASTLGSTRFEKTRWDGKDKDGKVVANGTYTYRVRYTPISSGAKEQHTDFDVIVDNTTPEAATSATFSAEDRRLTLASKPKTSQPVYRERIAYTYMDEDLPTTEYISPNEDGTFTLPEEAETMEGATVPLKMSDFTYVVEDMAGNITYTPVTNLLEGHSNKPEQDGSDQVPDKTPETKPEQDGSGQAPDKKPEAKPEQDGSGQAPDKKPETKPEKDSSGQTPGKTPQKGQPSRTLEKRSSKRALATKASARDQLPTTNDKDTNRLHLLKLVMTTFFFGLVAHIFKTKRQKETKK</sequence>
<proteinExistence type="inferred from homology"/>
<evidence type="ECO:0000250" key="1"/>
<evidence type="ECO:0000250" key="2">
    <source>
        <dbReference type="UniProtKB" id="P15926"/>
    </source>
</evidence>
<evidence type="ECO:0000250" key="3">
    <source>
        <dbReference type="UniProtKB" id="P58099"/>
    </source>
</evidence>
<evidence type="ECO:0000255" key="4">
    <source>
        <dbReference type="PROSITE-ProRule" id="PRU00477"/>
    </source>
</evidence>
<evidence type="ECO:0000255" key="5">
    <source>
        <dbReference type="PROSITE-ProRule" id="PRU01240"/>
    </source>
</evidence>
<evidence type="ECO:0000256" key="6">
    <source>
        <dbReference type="SAM" id="MobiDB-lite"/>
    </source>
</evidence>
<evidence type="ECO:0000305" key="7"/>
<feature type="signal peptide" evidence="2">
    <location>
        <begin position="1"/>
        <end position="31"/>
    </location>
</feature>
<feature type="chain" id="PRO_0000411455" description="C5a peptidase" evidence="1">
    <location>
        <begin position="32"/>
        <end position="1132"/>
    </location>
</feature>
<feature type="propeptide" id="PRO_0000411456" description="Removed by sortase" evidence="4">
    <location>
        <begin position="1133"/>
        <end position="1169"/>
    </location>
</feature>
<feature type="domain" description="Peptidase S8" evidence="5">
    <location>
        <begin position="101"/>
        <end position="583"/>
    </location>
</feature>
<feature type="repeat" description="1">
    <location>
        <begin position="1036"/>
        <end position="1052"/>
    </location>
</feature>
<feature type="repeat" description="2">
    <location>
        <begin position="1053"/>
        <end position="1069"/>
    </location>
</feature>
<feature type="repeat" description="3">
    <location>
        <begin position="1070"/>
        <end position="1086"/>
    </location>
</feature>
<feature type="repeat" description="4">
    <location>
        <begin position="1087"/>
        <end position="1103"/>
    </location>
</feature>
<feature type="region of interest" description="Disordered" evidence="6">
    <location>
        <begin position="33"/>
        <end position="111"/>
    </location>
</feature>
<feature type="region of interest" description="Disordered" evidence="6">
    <location>
        <begin position="1028"/>
        <end position="1135"/>
    </location>
</feature>
<feature type="region of interest" description="4 X 17 AA tandem repeats">
    <location>
        <begin position="1036"/>
        <end position="1103"/>
    </location>
</feature>
<feature type="short sequence motif" description="LPXTG sorting signal" evidence="4">
    <location>
        <begin position="1129"/>
        <end position="1133"/>
    </location>
</feature>
<feature type="compositionally biased region" description="Polar residues" evidence="6">
    <location>
        <begin position="48"/>
        <end position="67"/>
    </location>
</feature>
<feature type="compositionally biased region" description="Basic and acidic residues" evidence="6">
    <location>
        <begin position="102"/>
        <end position="111"/>
    </location>
</feature>
<feature type="compositionally biased region" description="Basic and acidic residues" evidence="6">
    <location>
        <begin position="1033"/>
        <end position="1056"/>
    </location>
</feature>
<feature type="compositionally biased region" description="Basic and acidic residues" evidence="6">
    <location>
        <begin position="1063"/>
        <end position="1073"/>
    </location>
</feature>
<feature type="compositionally biased region" description="Basic and acidic residues" evidence="6">
    <location>
        <begin position="1080"/>
        <end position="1092"/>
    </location>
</feature>
<feature type="compositionally biased region" description="Polar residues" evidence="6">
    <location>
        <begin position="1093"/>
        <end position="1108"/>
    </location>
</feature>
<feature type="active site" description="Charge relay system" evidence="5">
    <location>
        <position position="132"/>
    </location>
</feature>
<feature type="active site" description="Charge relay system" evidence="5">
    <location>
        <position position="195"/>
    </location>
</feature>
<feature type="active site" description="Charge relay system" evidence="5">
    <location>
        <position position="514"/>
    </location>
</feature>
<feature type="modified residue" description="Pentaglycyl murein peptidoglycan amidated threonine" evidence="4">
    <location>
        <position position="1132"/>
    </location>
</feature>
<accession>P0DD35</accession>
<accession>Q79W61</accession>
<accession>Q8K5Q0</accession>
<reference key="1">
    <citation type="journal article" date="2003" name="Genome Res.">
        <title>Genome sequence of an M3 strain of Streptococcus pyogenes reveals a large-scale genomic rearrangement in invasive strains and new insights into phage evolution.</title>
        <authorList>
            <person name="Nakagawa I."/>
            <person name="Kurokawa K."/>
            <person name="Yamashita A."/>
            <person name="Nakata M."/>
            <person name="Tomiyasu Y."/>
            <person name="Okahashi N."/>
            <person name="Kawabata S."/>
            <person name="Yamazaki K."/>
            <person name="Shiba T."/>
            <person name="Yasunaga T."/>
            <person name="Hayashi H."/>
            <person name="Hattori M."/>
            <person name="Hamada S."/>
        </authorList>
    </citation>
    <scope>NUCLEOTIDE SEQUENCE [LARGE SCALE GENOMIC DNA]</scope>
    <source>
        <strain>SSI-1</strain>
    </source>
</reference>